<name>RL7_MESHJ</name>
<comment type="function">
    <text evidence="1">Forms part of the ribosomal stalk which helps the ribosome interact with GTP-bound translation factors. Is thus essential for accurate translation.</text>
</comment>
<comment type="subunit">
    <text evidence="1">Homodimer. Part of the ribosomal stalk of the 50S ribosomal subunit. Forms a multimeric L10(L12)X complex, where L10 forms an elongated spine to which 2 to 4 L12 dimers bind in a sequential fashion. Binds GTP-bound translation factors.</text>
</comment>
<comment type="similarity">
    <text evidence="1">Belongs to the bacterial ribosomal protein bL12 family.</text>
</comment>
<sequence length="121" mass="12986">MAKITKEQFIESLKEMTIKEVMEFVDALKEEFGVDPSAVAVAATPVATEEVKTEVKLTLKAAGQQKVAVIKVVKDLLGLSLMDAKKLVDAAPSVLKEAIKPEEAEEYKAKLVAAGAEVSID</sequence>
<feature type="chain" id="PRO_1000195814" description="Large ribosomal subunit protein bL12">
    <location>
        <begin position="1"/>
        <end position="121"/>
    </location>
</feature>
<reference key="1">
    <citation type="journal article" date="2005" name="J. Bacteriol.">
        <title>Swine and poultry pathogens: the complete genome sequences of two strains of Mycoplasma hyopneumoniae and a strain of Mycoplasma synoviae.</title>
        <authorList>
            <person name="Vasconcelos A.T.R."/>
            <person name="Ferreira H.B."/>
            <person name="Bizarro C.V."/>
            <person name="Bonatto S.L."/>
            <person name="Carvalho M.O."/>
            <person name="Pinto P.M."/>
            <person name="Almeida D.F."/>
            <person name="Almeida L.G.P."/>
            <person name="Almeida R."/>
            <person name="Alves-Junior L."/>
            <person name="Assuncao E.N."/>
            <person name="Azevedo V.A.C."/>
            <person name="Bogo M.R."/>
            <person name="Brigido M.M."/>
            <person name="Brocchi M."/>
            <person name="Burity H.A."/>
            <person name="Camargo A.A."/>
            <person name="Camargo S.S."/>
            <person name="Carepo M.S."/>
            <person name="Carraro D.M."/>
            <person name="de Mattos Cascardo J.C."/>
            <person name="Castro L.A."/>
            <person name="Cavalcanti G."/>
            <person name="Chemale G."/>
            <person name="Collevatti R.G."/>
            <person name="Cunha C.W."/>
            <person name="Dallagiovanna B."/>
            <person name="Dambros B.P."/>
            <person name="Dellagostin O.A."/>
            <person name="Falcao C."/>
            <person name="Fantinatti-Garboggini F."/>
            <person name="Felipe M.S.S."/>
            <person name="Fiorentin L."/>
            <person name="Franco G.R."/>
            <person name="Freitas N.S.A."/>
            <person name="Frias D."/>
            <person name="Grangeiro T.B."/>
            <person name="Grisard E.C."/>
            <person name="Guimaraes C.T."/>
            <person name="Hungria M."/>
            <person name="Jardim S.N."/>
            <person name="Krieger M.A."/>
            <person name="Laurino J.P."/>
            <person name="Lima L.F.A."/>
            <person name="Lopes M.I."/>
            <person name="Loreto E.L.S."/>
            <person name="Madeira H.M.F."/>
            <person name="Manfio G.P."/>
            <person name="Maranhao A.Q."/>
            <person name="Martinkovics C.T."/>
            <person name="Medeiros S.R.B."/>
            <person name="Moreira M.A.M."/>
            <person name="Neiva M."/>
            <person name="Ramalho-Neto C.E."/>
            <person name="Nicolas M.F."/>
            <person name="Oliveira S.C."/>
            <person name="Paixao R.F.C."/>
            <person name="Pedrosa F.O."/>
            <person name="Pena S.D.J."/>
            <person name="Pereira M."/>
            <person name="Pereira-Ferrari L."/>
            <person name="Piffer I."/>
            <person name="Pinto L.S."/>
            <person name="Potrich D.P."/>
            <person name="Salim A.C.M."/>
            <person name="Santos F.R."/>
            <person name="Schmitt R."/>
            <person name="Schneider M.P.C."/>
            <person name="Schrank A."/>
            <person name="Schrank I.S."/>
            <person name="Schuck A.F."/>
            <person name="Seuanez H.N."/>
            <person name="Silva D.W."/>
            <person name="Silva R."/>
            <person name="Silva S.C."/>
            <person name="Soares C.M.A."/>
            <person name="Souza K.R.L."/>
            <person name="Souza R.C."/>
            <person name="Staats C.C."/>
            <person name="Steffens M.B.R."/>
            <person name="Teixeira S.M.R."/>
            <person name="Urmenyi T.P."/>
            <person name="Vainstein M.H."/>
            <person name="Zuccherato L.W."/>
            <person name="Simpson A.J.G."/>
            <person name="Zaha A."/>
        </authorList>
    </citation>
    <scope>NUCLEOTIDE SEQUENCE [LARGE SCALE GENOMIC DNA]</scope>
    <source>
        <strain>J / ATCC 25934 / NCTC 10110</strain>
    </source>
</reference>
<accession>Q4A968</accession>
<keyword id="KW-0687">Ribonucleoprotein</keyword>
<keyword id="KW-0689">Ribosomal protein</keyword>
<proteinExistence type="inferred from homology"/>
<protein>
    <recommendedName>
        <fullName evidence="1">Large ribosomal subunit protein bL12</fullName>
    </recommendedName>
    <alternativeName>
        <fullName evidence="2">50S ribosomal protein L7/L12</fullName>
    </alternativeName>
</protein>
<organism>
    <name type="scientific">Mesomycoplasma hyopneumoniae (strain J / ATCC 25934 / NCTC 10110)</name>
    <name type="common">Mycoplasma hyopneumoniae</name>
    <dbReference type="NCBI Taxonomy" id="262719"/>
    <lineage>
        <taxon>Bacteria</taxon>
        <taxon>Bacillati</taxon>
        <taxon>Mycoplasmatota</taxon>
        <taxon>Mycoplasmoidales</taxon>
        <taxon>Metamycoplasmataceae</taxon>
        <taxon>Mesomycoplasma</taxon>
    </lineage>
</organism>
<evidence type="ECO:0000255" key="1">
    <source>
        <dbReference type="HAMAP-Rule" id="MF_00368"/>
    </source>
</evidence>
<evidence type="ECO:0000305" key="2"/>
<gene>
    <name evidence="1" type="primary">rplL</name>
    <name type="ordered locus">MHJ_0619</name>
</gene>
<dbReference type="EMBL" id="AE017243">
    <property type="protein sequence ID" value="AAZ44703.1"/>
    <property type="molecule type" value="Genomic_DNA"/>
</dbReference>
<dbReference type="RefSeq" id="WP_011206468.1">
    <property type="nucleotide sequence ID" value="NC_007295.1"/>
</dbReference>
<dbReference type="SMR" id="Q4A968"/>
<dbReference type="GeneID" id="41334921"/>
<dbReference type="KEGG" id="mhj:MHJ_0619"/>
<dbReference type="eggNOG" id="COG0222">
    <property type="taxonomic scope" value="Bacteria"/>
</dbReference>
<dbReference type="HOGENOM" id="CLU_086499_3_2_14"/>
<dbReference type="OrthoDB" id="9811748at2"/>
<dbReference type="Proteomes" id="UP000000548">
    <property type="component" value="Chromosome"/>
</dbReference>
<dbReference type="GO" id="GO:0022625">
    <property type="term" value="C:cytosolic large ribosomal subunit"/>
    <property type="evidence" value="ECO:0007669"/>
    <property type="project" value="TreeGrafter"/>
</dbReference>
<dbReference type="GO" id="GO:0003729">
    <property type="term" value="F:mRNA binding"/>
    <property type="evidence" value="ECO:0007669"/>
    <property type="project" value="TreeGrafter"/>
</dbReference>
<dbReference type="GO" id="GO:0003735">
    <property type="term" value="F:structural constituent of ribosome"/>
    <property type="evidence" value="ECO:0007669"/>
    <property type="project" value="InterPro"/>
</dbReference>
<dbReference type="GO" id="GO:0006412">
    <property type="term" value="P:translation"/>
    <property type="evidence" value="ECO:0007669"/>
    <property type="project" value="UniProtKB-UniRule"/>
</dbReference>
<dbReference type="CDD" id="cd00387">
    <property type="entry name" value="Ribosomal_L7_L12"/>
    <property type="match status" value="1"/>
</dbReference>
<dbReference type="FunFam" id="3.30.1390.10:FF:000001">
    <property type="entry name" value="50S ribosomal protein L7/L12"/>
    <property type="match status" value="1"/>
</dbReference>
<dbReference type="Gene3D" id="3.30.1390.10">
    <property type="match status" value="1"/>
</dbReference>
<dbReference type="Gene3D" id="1.20.5.710">
    <property type="entry name" value="Single helix bin"/>
    <property type="match status" value="1"/>
</dbReference>
<dbReference type="HAMAP" id="MF_00368">
    <property type="entry name" value="Ribosomal_bL12"/>
    <property type="match status" value="1"/>
</dbReference>
<dbReference type="InterPro" id="IPR000206">
    <property type="entry name" value="Ribosomal_bL12"/>
</dbReference>
<dbReference type="InterPro" id="IPR013823">
    <property type="entry name" value="Ribosomal_bL12_C"/>
</dbReference>
<dbReference type="InterPro" id="IPR014719">
    <property type="entry name" value="Ribosomal_bL12_C/ClpS-like"/>
</dbReference>
<dbReference type="InterPro" id="IPR008932">
    <property type="entry name" value="Ribosomal_bL12_oligo"/>
</dbReference>
<dbReference type="InterPro" id="IPR036235">
    <property type="entry name" value="Ribosomal_bL12_oligo_N_sf"/>
</dbReference>
<dbReference type="NCBIfam" id="TIGR00855">
    <property type="entry name" value="L12"/>
    <property type="match status" value="1"/>
</dbReference>
<dbReference type="PANTHER" id="PTHR45987">
    <property type="entry name" value="39S RIBOSOMAL PROTEIN L12"/>
    <property type="match status" value="1"/>
</dbReference>
<dbReference type="PANTHER" id="PTHR45987:SF4">
    <property type="entry name" value="LARGE RIBOSOMAL SUBUNIT PROTEIN BL12M"/>
    <property type="match status" value="1"/>
</dbReference>
<dbReference type="Pfam" id="PF00542">
    <property type="entry name" value="Ribosomal_L12"/>
    <property type="match status" value="1"/>
</dbReference>
<dbReference type="Pfam" id="PF16320">
    <property type="entry name" value="Ribosomal_L12_N"/>
    <property type="match status" value="1"/>
</dbReference>
<dbReference type="SUPFAM" id="SSF54736">
    <property type="entry name" value="ClpS-like"/>
    <property type="match status" value="1"/>
</dbReference>
<dbReference type="SUPFAM" id="SSF48300">
    <property type="entry name" value="Ribosomal protein L7/12, oligomerisation (N-terminal) domain"/>
    <property type="match status" value="1"/>
</dbReference>